<keyword id="KW-0997">Cell inner membrane</keyword>
<keyword id="KW-1003">Cell membrane</keyword>
<keyword id="KW-0472">Membrane</keyword>
<keyword id="KW-1185">Reference proteome</keyword>
<keyword id="KW-0812">Transmembrane</keyword>
<keyword id="KW-1133">Transmembrane helix</keyword>
<protein>
    <recommendedName>
        <fullName>UPF0259 membrane protein YciC</fullName>
    </recommendedName>
</protein>
<proteinExistence type="inferred from homology"/>
<accession>Q83LC9</accession>
<sequence>MSITAQSVYRDTGNFFRNQFMTILLVSLLCAFITVVLGHVFSPSDAQLAQLNDGVPVSGSSGLFDLVQNMSPEQQQILLQASAASTFSELIGNAILAGGVILIIQLVSAGQRVSALRAIGASAPILPKLFILIFLTTLLVQIGIMLVVVPGIIMAILLALAPVMLVQDKMGIFASMRSSMRLTWANMRLVAPAVLSWLLAKTLLLLFASSFAALTPEIGAVLANTLSNLISAILLIYLFRLYMLIRQ</sequence>
<gene>
    <name type="primary">yciC</name>
    <name type="ordered locus">SF1258</name>
    <name type="ordered locus">S1344</name>
</gene>
<evidence type="ECO:0000250" key="1"/>
<evidence type="ECO:0000255" key="2"/>
<evidence type="ECO:0000305" key="3"/>
<reference key="1">
    <citation type="journal article" date="2002" name="Nucleic Acids Res.">
        <title>Genome sequence of Shigella flexneri 2a: insights into pathogenicity through comparison with genomes of Escherichia coli K12 and O157.</title>
        <authorList>
            <person name="Jin Q."/>
            <person name="Yuan Z."/>
            <person name="Xu J."/>
            <person name="Wang Y."/>
            <person name="Shen Y."/>
            <person name="Lu W."/>
            <person name="Wang J."/>
            <person name="Liu H."/>
            <person name="Yang J."/>
            <person name="Yang F."/>
            <person name="Zhang X."/>
            <person name="Zhang J."/>
            <person name="Yang G."/>
            <person name="Wu H."/>
            <person name="Qu D."/>
            <person name="Dong J."/>
            <person name="Sun L."/>
            <person name="Xue Y."/>
            <person name="Zhao A."/>
            <person name="Gao Y."/>
            <person name="Zhu J."/>
            <person name="Kan B."/>
            <person name="Ding K."/>
            <person name="Chen S."/>
            <person name="Cheng H."/>
            <person name="Yao Z."/>
            <person name="He B."/>
            <person name="Chen R."/>
            <person name="Ma D."/>
            <person name="Qiang B."/>
            <person name="Wen Y."/>
            <person name="Hou Y."/>
            <person name="Yu J."/>
        </authorList>
    </citation>
    <scope>NUCLEOTIDE SEQUENCE [LARGE SCALE GENOMIC DNA]</scope>
    <source>
        <strain>301 / Serotype 2a</strain>
    </source>
</reference>
<reference key="2">
    <citation type="journal article" date="2003" name="Infect. Immun.">
        <title>Complete genome sequence and comparative genomics of Shigella flexneri serotype 2a strain 2457T.</title>
        <authorList>
            <person name="Wei J."/>
            <person name="Goldberg M.B."/>
            <person name="Burland V."/>
            <person name="Venkatesan M.M."/>
            <person name="Deng W."/>
            <person name="Fournier G."/>
            <person name="Mayhew G.F."/>
            <person name="Plunkett G. III"/>
            <person name="Rose D.J."/>
            <person name="Darling A."/>
            <person name="Mau B."/>
            <person name="Perna N.T."/>
            <person name="Payne S.M."/>
            <person name="Runyen-Janecky L.J."/>
            <person name="Zhou S."/>
            <person name="Schwartz D.C."/>
            <person name="Blattner F.R."/>
        </authorList>
    </citation>
    <scope>NUCLEOTIDE SEQUENCE [LARGE SCALE GENOMIC DNA]</scope>
    <source>
        <strain>ATCC 700930 / 2457T / Serotype 2a</strain>
    </source>
</reference>
<organism>
    <name type="scientific">Shigella flexneri</name>
    <dbReference type="NCBI Taxonomy" id="623"/>
    <lineage>
        <taxon>Bacteria</taxon>
        <taxon>Pseudomonadati</taxon>
        <taxon>Pseudomonadota</taxon>
        <taxon>Gammaproteobacteria</taxon>
        <taxon>Enterobacterales</taxon>
        <taxon>Enterobacteriaceae</taxon>
        <taxon>Shigella</taxon>
    </lineage>
</organism>
<comment type="subcellular location">
    <subcellularLocation>
        <location evidence="1">Cell inner membrane</location>
        <topology evidence="1">Multi-pass membrane protein</topology>
    </subcellularLocation>
</comment>
<comment type="similarity">
    <text evidence="3">Belongs to the UPF0259 family.</text>
</comment>
<dbReference type="EMBL" id="AE005674">
    <property type="protein sequence ID" value="AAN42871.2"/>
    <property type="molecule type" value="Genomic_DNA"/>
</dbReference>
<dbReference type="EMBL" id="AE014073">
    <property type="protein sequence ID" value="AAP16756.1"/>
    <property type="molecule type" value="Genomic_DNA"/>
</dbReference>
<dbReference type="RefSeq" id="NP_707164.2">
    <property type="nucleotide sequence ID" value="NC_004337.2"/>
</dbReference>
<dbReference type="RefSeq" id="WP_000028536.1">
    <property type="nucleotide sequence ID" value="NZ_WPGW01000009.1"/>
</dbReference>
<dbReference type="STRING" id="198214.SF1258"/>
<dbReference type="PaxDb" id="198214-SF1258"/>
<dbReference type="GeneID" id="1024190"/>
<dbReference type="KEGG" id="sfl:SF1258"/>
<dbReference type="KEGG" id="sfx:S1344"/>
<dbReference type="PATRIC" id="fig|198214.7.peg.1478"/>
<dbReference type="HOGENOM" id="CLU_073287_0_0_6"/>
<dbReference type="Proteomes" id="UP000001006">
    <property type="component" value="Chromosome"/>
</dbReference>
<dbReference type="Proteomes" id="UP000002673">
    <property type="component" value="Chromosome"/>
</dbReference>
<dbReference type="GO" id="GO:0005886">
    <property type="term" value="C:plasma membrane"/>
    <property type="evidence" value="ECO:0007669"/>
    <property type="project" value="UniProtKB-SubCell"/>
</dbReference>
<dbReference type="HAMAP" id="MF_01067">
    <property type="entry name" value="UPF0259"/>
    <property type="match status" value="1"/>
</dbReference>
<dbReference type="InterPro" id="IPR009627">
    <property type="entry name" value="UPF0259"/>
</dbReference>
<dbReference type="NCBIfam" id="NF002774">
    <property type="entry name" value="PRK02868.1"/>
    <property type="match status" value="1"/>
</dbReference>
<dbReference type="Pfam" id="PF06790">
    <property type="entry name" value="UPF0259"/>
    <property type="match status" value="1"/>
</dbReference>
<feature type="chain" id="PRO_0000206520" description="UPF0259 membrane protein YciC">
    <location>
        <begin position="1"/>
        <end position="247"/>
    </location>
</feature>
<feature type="topological domain" description="Cytoplasmic" evidence="2">
    <location>
        <begin position="1"/>
        <end position="19"/>
    </location>
</feature>
<feature type="transmembrane region" description="Helical" evidence="2">
    <location>
        <begin position="20"/>
        <end position="40"/>
    </location>
</feature>
<feature type="topological domain" description="Periplasmic" evidence="2">
    <location>
        <begin position="41"/>
        <end position="89"/>
    </location>
</feature>
<feature type="transmembrane region" description="Helical" evidence="2">
    <location>
        <begin position="90"/>
        <end position="110"/>
    </location>
</feature>
<feature type="topological domain" description="Cytoplasmic" evidence="2">
    <location>
        <begin position="111"/>
        <end position="117"/>
    </location>
</feature>
<feature type="transmembrane region" description="Helical" evidence="2">
    <location>
        <begin position="118"/>
        <end position="140"/>
    </location>
</feature>
<feature type="topological domain" description="Periplasmic" evidence="2">
    <location>
        <begin position="141"/>
        <end position="151"/>
    </location>
</feature>
<feature type="transmembrane region" description="Helical" evidence="2">
    <location>
        <begin position="152"/>
        <end position="172"/>
    </location>
</feature>
<feature type="topological domain" description="Cytoplasmic" evidence="2">
    <location>
        <begin position="173"/>
        <end position="186"/>
    </location>
</feature>
<feature type="transmembrane region" description="Helical" evidence="2">
    <location>
        <begin position="187"/>
        <end position="209"/>
    </location>
</feature>
<feature type="topological domain" description="Periplasmic" evidence="2">
    <location>
        <begin position="210"/>
        <end position="224"/>
    </location>
</feature>
<feature type="transmembrane region" description="Helical" evidence="2">
    <location>
        <begin position="225"/>
        <end position="245"/>
    </location>
</feature>
<feature type="topological domain" description="Cytoplasmic" evidence="2">
    <location>
        <begin position="246"/>
        <end position="247"/>
    </location>
</feature>
<name>YCIC_SHIFL</name>